<reference key="1">
    <citation type="journal article" date="2006" name="Proc. Natl. Acad. Sci. U.S.A.">
        <title>Evolution of sensory complexity recorded in a myxobacterial genome.</title>
        <authorList>
            <person name="Goldman B.S."/>
            <person name="Nierman W.C."/>
            <person name="Kaiser D."/>
            <person name="Slater S.C."/>
            <person name="Durkin A.S."/>
            <person name="Eisen J.A."/>
            <person name="Ronning C.M."/>
            <person name="Barbazuk W.B."/>
            <person name="Blanchard M."/>
            <person name="Field C."/>
            <person name="Halling C."/>
            <person name="Hinkle G."/>
            <person name="Iartchuk O."/>
            <person name="Kim H.S."/>
            <person name="Mackenzie C."/>
            <person name="Madupu R."/>
            <person name="Miller N."/>
            <person name="Shvartsbeyn A."/>
            <person name="Sullivan S.A."/>
            <person name="Vaudin M."/>
            <person name="Wiegand R."/>
            <person name="Kaplan H.B."/>
        </authorList>
    </citation>
    <scope>NUCLEOTIDE SEQUENCE [LARGE SCALE GENOMIC DNA]</scope>
    <source>
        <strain>DK1622</strain>
    </source>
</reference>
<organism>
    <name type="scientific">Myxococcus xanthus (strain DK1622)</name>
    <dbReference type="NCBI Taxonomy" id="246197"/>
    <lineage>
        <taxon>Bacteria</taxon>
        <taxon>Pseudomonadati</taxon>
        <taxon>Myxococcota</taxon>
        <taxon>Myxococcia</taxon>
        <taxon>Myxococcales</taxon>
        <taxon>Cystobacterineae</taxon>
        <taxon>Myxococcaceae</taxon>
        <taxon>Myxococcus</taxon>
    </lineage>
</organism>
<protein>
    <recommendedName>
        <fullName evidence="1">Homogentisate 1,2-dioxygenase</fullName>
        <shortName evidence="1">HGDO</shortName>
        <ecNumber evidence="1">1.13.11.5</ecNumber>
    </recommendedName>
    <alternativeName>
        <fullName evidence="1">Homogentisate oxygenase</fullName>
    </alternativeName>
    <alternativeName>
        <fullName evidence="1">Homogentisic acid oxidase</fullName>
    </alternativeName>
    <alternativeName>
        <fullName evidence="1">Homogentisicase</fullName>
    </alternativeName>
</protein>
<evidence type="ECO:0000255" key="1">
    <source>
        <dbReference type="HAMAP-Rule" id="MF_00334"/>
    </source>
</evidence>
<accession>Q1D8L9</accession>
<feature type="chain" id="PRO_1000119844" description="Homogentisate 1,2-dioxygenase">
    <location>
        <begin position="1"/>
        <end position="437"/>
    </location>
</feature>
<feature type="active site" description="Proton acceptor" evidence="1">
    <location>
        <position position="295"/>
    </location>
</feature>
<feature type="binding site" evidence="1">
    <location>
        <position position="338"/>
    </location>
    <ligand>
        <name>Fe cation</name>
        <dbReference type="ChEBI" id="CHEBI:24875"/>
    </ligand>
</feature>
<feature type="binding site" evidence="1">
    <location>
        <position position="344"/>
    </location>
    <ligand>
        <name>Fe cation</name>
        <dbReference type="ChEBI" id="CHEBI:24875"/>
    </ligand>
</feature>
<feature type="binding site" evidence="1">
    <location>
        <position position="353"/>
    </location>
    <ligand>
        <name>homogentisate</name>
        <dbReference type="ChEBI" id="CHEBI:16169"/>
    </ligand>
</feature>
<feature type="binding site" evidence="1">
    <location>
        <position position="374"/>
    </location>
    <ligand>
        <name>Fe cation</name>
        <dbReference type="ChEBI" id="CHEBI:24875"/>
    </ligand>
</feature>
<feature type="binding site" evidence="1">
    <location>
        <position position="374"/>
    </location>
    <ligand>
        <name>homogentisate</name>
        <dbReference type="ChEBI" id="CHEBI:16169"/>
    </ligand>
</feature>
<gene>
    <name evidence="1" type="primary">hmgA</name>
    <name type="ordered locus">MXAN_2787</name>
</gene>
<dbReference type="EC" id="1.13.11.5" evidence="1"/>
<dbReference type="EMBL" id="CP000113">
    <property type="protein sequence ID" value="ABF89328.1"/>
    <property type="molecule type" value="Genomic_DNA"/>
</dbReference>
<dbReference type="SMR" id="Q1D8L9"/>
<dbReference type="STRING" id="246197.MXAN_2787"/>
<dbReference type="EnsemblBacteria" id="ABF89328">
    <property type="protein sequence ID" value="ABF89328"/>
    <property type="gene ID" value="MXAN_2787"/>
</dbReference>
<dbReference type="KEGG" id="mxa:MXAN_2787"/>
<dbReference type="eggNOG" id="COG3508">
    <property type="taxonomic scope" value="Bacteria"/>
</dbReference>
<dbReference type="HOGENOM" id="CLU_027174_0_0_7"/>
<dbReference type="UniPathway" id="UPA00139">
    <property type="reaction ID" value="UER00339"/>
</dbReference>
<dbReference type="Proteomes" id="UP000002402">
    <property type="component" value="Chromosome"/>
</dbReference>
<dbReference type="GO" id="GO:0005737">
    <property type="term" value="C:cytoplasm"/>
    <property type="evidence" value="ECO:0007669"/>
    <property type="project" value="TreeGrafter"/>
</dbReference>
<dbReference type="GO" id="GO:0004411">
    <property type="term" value="F:homogentisate 1,2-dioxygenase activity"/>
    <property type="evidence" value="ECO:0007669"/>
    <property type="project" value="UniProtKB-UniRule"/>
</dbReference>
<dbReference type="GO" id="GO:0005506">
    <property type="term" value="F:iron ion binding"/>
    <property type="evidence" value="ECO:0007669"/>
    <property type="project" value="UniProtKB-UniRule"/>
</dbReference>
<dbReference type="GO" id="GO:0006559">
    <property type="term" value="P:L-phenylalanine catabolic process"/>
    <property type="evidence" value="ECO:0007669"/>
    <property type="project" value="UniProtKB-UniRule"/>
</dbReference>
<dbReference type="GO" id="GO:0006572">
    <property type="term" value="P:tyrosine catabolic process"/>
    <property type="evidence" value="ECO:0007669"/>
    <property type="project" value="UniProtKB-UniRule"/>
</dbReference>
<dbReference type="CDD" id="cd07000">
    <property type="entry name" value="cupin_HGO_N"/>
    <property type="match status" value="1"/>
</dbReference>
<dbReference type="FunFam" id="2.60.120.10:FF:000034">
    <property type="entry name" value="Homogentisate 1,2-dioxygenase"/>
    <property type="match status" value="1"/>
</dbReference>
<dbReference type="Gene3D" id="2.60.120.10">
    <property type="entry name" value="Jelly Rolls"/>
    <property type="match status" value="1"/>
</dbReference>
<dbReference type="HAMAP" id="MF_00334">
    <property type="entry name" value="Homogentis_dioxygen"/>
    <property type="match status" value="1"/>
</dbReference>
<dbReference type="InterPro" id="IPR046451">
    <property type="entry name" value="HgmA_C"/>
</dbReference>
<dbReference type="InterPro" id="IPR046452">
    <property type="entry name" value="HgmA_N"/>
</dbReference>
<dbReference type="InterPro" id="IPR005708">
    <property type="entry name" value="Homogentis_dOase"/>
</dbReference>
<dbReference type="InterPro" id="IPR022950">
    <property type="entry name" value="Homogentis_dOase_bac"/>
</dbReference>
<dbReference type="InterPro" id="IPR014710">
    <property type="entry name" value="RmlC-like_jellyroll"/>
</dbReference>
<dbReference type="InterPro" id="IPR011051">
    <property type="entry name" value="RmlC_Cupin_sf"/>
</dbReference>
<dbReference type="NCBIfam" id="TIGR01015">
    <property type="entry name" value="hmgA"/>
    <property type="match status" value="1"/>
</dbReference>
<dbReference type="PANTHER" id="PTHR11056">
    <property type="entry name" value="HOMOGENTISATE 1,2-DIOXYGENASE"/>
    <property type="match status" value="1"/>
</dbReference>
<dbReference type="PANTHER" id="PTHR11056:SF0">
    <property type="entry name" value="HOMOGENTISATE 1,2-DIOXYGENASE"/>
    <property type="match status" value="1"/>
</dbReference>
<dbReference type="Pfam" id="PF04209">
    <property type="entry name" value="HgmA_C"/>
    <property type="match status" value="1"/>
</dbReference>
<dbReference type="Pfam" id="PF20510">
    <property type="entry name" value="HgmA_N"/>
    <property type="match status" value="1"/>
</dbReference>
<dbReference type="SUPFAM" id="SSF51182">
    <property type="entry name" value="RmlC-like cupins"/>
    <property type="match status" value="1"/>
</dbReference>
<sequence length="437" mass="47825">MSPGSVLKTAPGAYLSGFGNEFATEAVPGALPEGQNSPQRAPFGLYAEQLSGSAFTAPRRENRRSWLYRLRPSANHPAFQPLAQGLLRSGPFDEVPASPNRLRWSPQPPPAQPTDFVDGLVTYAGNGDAASGAGISIHLYAANRSMVDRVFFDADGELLIVPQAGRLRLVTELGVLDVAPGEIAVVPRGVRFRAELPEGQAAGYVCENHGAFFRLPDLGPIGANGLANPRDFLTPVAAFEDVDRPTEVVQKFLGRLWSARYSYSPLDVVAWHGNLVPYKYDLARFNTINTVSFDHPDPSIFTVLTSPSEVPGTANCDFVIFPPRWMVAEHTFRPPWFHRNVMSEFMGLVHGVYDAKAGGFAPGGGSLHNCMSGHGPDRTSYEQAIQADLKPHKIKDTLAFMFESRWVIRPTRFAMETPALQQDYDACWAGFQKAKLP</sequence>
<name>HGD_MYXXD</name>
<keyword id="KW-0223">Dioxygenase</keyword>
<keyword id="KW-0408">Iron</keyword>
<keyword id="KW-0479">Metal-binding</keyword>
<keyword id="KW-0560">Oxidoreductase</keyword>
<keyword id="KW-0585">Phenylalanine catabolism</keyword>
<keyword id="KW-1185">Reference proteome</keyword>
<keyword id="KW-0828">Tyrosine catabolism</keyword>
<comment type="function">
    <text evidence="1">Involved in the catabolism of homogentisate (2,5-dihydroxyphenylacetate or 2,5-OH-PhAc), a central intermediate in the degradation of phenylalanine and tyrosine. Catalyzes the oxidative ring cleavage of the aromatic ring of homogentisate to yield maleylacetoacetate.</text>
</comment>
<comment type="catalytic activity">
    <reaction evidence="1">
        <text>homogentisate + O2 = 4-maleylacetoacetate + H(+)</text>
        <dbReference type="Rhea" id="RHEA:15449"/>
        <dbReference type="ChEBI" id="CHEBI:15378"/>
        <dbReference type="ChEBI" id="CHEBI:15379"/>
        <dbReference type="ChEBI" id="CHEBI:16169"/>
        <dbReference type="ChEBI" id="CHEBI:17105"/>
        <dbReference type="EC" id="1.13.11.5"/>
    </reaction>
</comment>
<comment type="cofactor">
    <cofactor evidence="1">
        <name>Fe cation</name>
        <dbReference type="ChEBI" id="CHEBI:24875"/>
    </cofactor>
</comment>
<comment type="pathway">
    <text evidence="1">Amino-acid degradation; L-phenylalanine degradation; acetoacetate and fumarate from L-phenylalanine: step 4/6.</text>
</comment>
<comment type="subunit">
    <text evidence="1">Hexamer; dimer of trimers.</text>
</comment>
<comment type="similarity">
    <text evidence="1">Belongs to the homogentisate dioxygenase family.</text>
</comment>
<proteinExistence type="inferred from homology"/>